<protein>
    <recommendedName>
        <fullName>43 kDa protein</fullName>
    </recommendedName>
</protein>
<reference key="1">
    <citation type="journal article" date="1993" name="J. Virol.">
        <title>Sequence, transcriptional mapping, and overexpression of p47, a baculovirus gene regulating late gene expression.</title>
        <authorList>
            <person name="Carstens E.B."/>
            <person name="Lu A.L."/>
            <person name="Chan H.L.B."/>
        </authorList>
    </citation>
    <scope>NUCLEOTIDE SEQUENCE</scope>
    <source>
        <strain>HR3</strain>
    </source>
</reference>
<reference key="2">
    <citation type="journal article" date="1994" name="Virology">
        <title>The complete DNA sequence of Autographa californica nuclear polyhedrosis virus.</title>
        <authorList>
            <person name="Ayres M.D."/>
            <person name="Howard S.C."/>
            <person name="Kuzio J."/>
            <person name="Lopez-Ferber M."/>
            <person name="Possee R.D."/>
        </authorList>
    </citation>
    <scope>NUCLEOTIDE SEQUENCE [LARGE SCALE GENOMIC DNA]</scope>
    <source>
        <strain>C6</strain>
    </source>
</reference>
<proteinExistence type="predicted"/>
<sequence length="363" mass="43490">MDKRANSRKPFLFYNEDYYCEKPKRYFHTNKVIFEKLDSYATNINRCRELLTDFFDYCLPKYYRRKNKFTLLFRLLEPVIKQAGASALTTVSNDQCRWLEINQFSGWEQRDNQYAHKWLIKVVGADMGQQILFIIKQVTKKFKTCNLGFHNYYKLFRRCLSILLFKHKEVFVQCLQVILKAAMPVKKKGVVKSNYAFAVTNALHYYIVDNPHLLCKDINVAIKVRRLLIKHEMLPTEKQIKLSFEKCSKGIEVPLYEKLLLNHMMRINDDNLQWPSLINNKKIMEWNANRCFDESNKILHVYIGQYYTSSCRRVKKSFFKYNGWNRQGRFCRTEKFCHLVNLQLNKDGSKKLKRVQRKLINCK</sequence>
<name>VP43_NPVAC</name>
<organismHost>
    <name type="scientific">Lepidoptera</name>
    <name type="common">butterflies and moths</name>
    <dbReference type="NCBI Taxonomy" id="7088"/>
</organismHost>
<gene>
    <name type="primary">P43</name>
</gene>
<dbReference type="EMBL" id="L07878">
    <property type="protein sequence ID" value="AAA16858.1"/>
    <property type="molecule type" value="Unassigned_DNA"/>
</dbReference>
<dbReference type="EMBL" id="L22858">
    <property type="protein sequence ID" value="AAA66669.1"/>
    <property type="molecule type" value="Genomic_DNA"/>
</dbReference>
<dbReference type="PIR" id="G72854">
    <property type="entry name" value="G72854"/>
</dbReference>
<dbReference type="KEGG" id="vg:1403871"/>
<dbReference type="OrthoDB" id="5636at10239"/>
<dbReference type="Proteomes" id="UP000008292">
    <property type="component" value="Segment"/>
</dbReference>
<dbReference type="InterPro" id="IPR035120">
    <property type="entry name" value="DUF5509"/>
</dbReference>
<dbReference type="Pfam" id="PF17625">
    <property type="entry name" value="DUF5509"/>
    <property type="match status" value="1"/>
</dbReference>
<keyword id="KW-1185">Reference proteome</keyword>
<organism>
    <name type="scientific">Autographa californica nuclear polyhedrosis virus</name>
    <name type="common">AcMNPV</name>
    <dbReference type="NCBI Taxonomy" id="46015"/>
    <lineage>
        <taxon>Viruses</taxon>
        <taxon>Viruses incertae sedis</taxon>
        <taxon>Naldaviricetes</taxon>
        <taxon>Lefavirales</taxon>
        <taxon>Baculoviridae</taxon>
        <taxon>Alphabaculovirus</taxon>
        <taxon>Alphabaculovirus aucalifornicae</taxon>
    </lineage>
</organism>
<accession>P34050</accession>
<feature type="chain" id="PRO_0000132907" description="43 kDa protein">
    <location>
        <begin position="1"/>
        <end position="363"/>
    </location>
</feature>